<gene>
    <name evidence="1" type="primary">glyA</name>
    <name type="ordered locus">Lreu_0455</name>
</gene>
<reference key="1">
    <citation type="journal article" date="2011" name="PLoS Genet.">
        <title>The evolution of host specialization in the vertebrate gut symbiont Lactobacillus reuteri.</title>
        <authorList>
            <person name="Frese S.A."/>
            <person name="Benson A.K."/>
            <person name="Tannock G.W."/>
            <person name="Loach D.M."/>
            <person name="Kim J."/>
            <person name="Zhang M."/>
            <person name="Oh P.L."/>
            <person name="Heng N.C."/>
            <person name="Patil P.B."/>
            <person name="Juge N."/>
            <person name="Mackenzie D.A."/>
            <person name="Pearson B.M."/>
            <person name="Lapidus A."/>
            <person name="Dalin E."/>
            <person name="Tice H."/>
            <person name="Goltsman E."/>
            <person name="Land M."/>
            <person name="Hauser L."/>
            <person name="Ivanova N."/>
            <person name="Kyrpides N.C."/>
            <person name="Walter J."/>
        </authorList>
    </citation>
    <scope>NUCLEOTIDE SEQUENCE [LARGE SCALE GENOMIC DNA]</scope>
    <source>
        <strain>DSM 20016</strain>
    </source>
</reference>
<evidence type="ECO:0000255" key="1">
    <source>
        <dbReference type="HAMAP-Rule" id="MF_00051"/>
    </source>
</evidence>
<sequence>MNYGKKSPQLWAAIENEEQRQQDTIELIASENIVSDAVREAQGSVLTNKYAEGYPNKRYYGGCEFIDQVEQLAIDYAKKLFNAAYVNVQPHSGSQANMAVYQALLKPGDVILGMGMDAGGHLTHGATVNFSGKLYKTYGYGLNPDTEELDYDEIMALAKKVKPQLIVAGASAYSRIIDWQAFRKIADEVGAYLMVDMAHIAGLVATGTHPSPLPIADVVTTTTHKTLRGPRGGMILSKSTELGRKINSAVFPGIQGGPLEHVIAGKAQAFYEDLQPEYAEYIQQVVKNAQAMEKVFNTSKQIRVVSGKTENHLLVLDLTKTGLTGKDAQNLLDRVHITTNKEAIPNDPRSPFITSGLRIGTPAITSRGFKEEDAQKVAELISTALTNPTDEERLQEVAKGVHELTTKYPLN</sequence>
<feature type="chain" id="PRO_1000057368" description="Serine hydroxymethyltransferase">
    <location>
        <begin position="1"/>
        <end position="411"/>
    </location>
</feature>
<feature type="binding site" evidence="1">
    <location>
        <begin position="120"/>
        <end position="122"/>
    </location>
    <ligand>
        <name>(6S)-5,6,7,8-tetrahydrofolate</name>
        <dbReference type="ChEBI" id="CHEBI:57453"/>
    </ligand>
</feature>
<feature type="binding site" evidence="1">
    <location>
        <begin position="350"/>
        <end position="352"/>
    </location>
    <ligand>
        <name>(6S)-5,6,7,8-tetrahydrofolate</name>
        <dbReference type="ChEBI" id="CHEBI:57453"/>
    </ligand>
</feature>
<feature type="site" description="Plays an important role in substrate specificity" evidence="1">
    <location>
        <position position="224"/>
    </location>
</feature>
<feature type="modified residue" description="N6-(pyridoxal phosphate)lysine" evidence="1">
    <location>
        <position position="225"/>
    </location>
</feature>
<protein>
    <recommendedName>
        <fullName evidence="1">Serine hydroxymethyltransferase</fullName>
        <shortName evidence="1">SHMT</shortName>
        <shortName evidence="1">Serine methylase</shortName>
        <ecNumber evidence="1">2.1.2.1</ecNumber>
    </recommendedName>
</protein>
<proteinExistence type="inferred from homology"/>
<accession>A5VIP9</accession>
<organism>
    <name type="scientific">Limosilactobacillus reuteri (strain DSM 20016)</name>
    <name type="common">Lactobacillus reuteri</name>
    <dbReference type="NCBI Taxonomy" id="557436"/>
    <lineage>
        <taxon>Bacteria</taxon>
        <taxon>Bacillati</taxon>
        <taxon>Bacillota</taxon>
        <taxon>Bacilli</taxon>
        <taxon>Lactobacillales</taxon>
        <taxon>Lactobacillaceae</taxon>
        <taxon>Limosilactobacillus</taxon>
    </lineage>
</organism>
<comment type="function">
    <text evidence="1">Catalyzes the reversible interconversion of serine and glycine with tetrahydrofolate (THF) serving as the one-carbon carrier. This reaction serves as the major source of one-carbon groups required for the biosynthesis of purines, thymidylate, methionine, and other important biomolecules. Also exhibits THF-independent aldolase activity toward beta-hydroxyamino acids, producing glycine and aldehydes, via a retro-aldol mechanism.</text>
</comment>
<comment type="catalytic activity">
    <reaction evidence="1">
        <text>(6R)-5,10-methylene-5,6,7,8-tetrahydrofolate + glycine + H2O = (6S)-5,6,7,8-tetrahydrofolate + L-serine</text>
        <dbReference type="Rhea" id="RHEA:15481"/>
        <dbReference type="ChEBI" id="CHEBI:15377"/>
        <dbReference type="ChEBI" id="CHEBI:15636"/>
        <dbReference type="ChEBI" id="CHEBI:33384"/>
        <dbReference type="ChEBI" id="CHEBI:57305"/>
        <dbReference type="ChEBI" id="CHEBI:57453"/>
        <dbReference type="EC" id="2.1.2.1"/>
    </reaction>
</comment>
<comment type="cofactor">
    <cofactor evidence="1">
        <name>pyridoxal 5'-phosphate</name>
        <dbReference type="ChEBI" id="CHEBI:597326"/>
    </cofactor>
</comment>
<comment type="pathway">
    <text evidence="1">One-carbon metabolism; tetrahydrofolate interconversion.</text>
</comment>
<comment type="pathway">
    <text evidence="1">Amino-acid biosynthesis; glycine biosynthesis; glycine from L-serine: step 1/1.</text>
</comment>
<comment type="subunit">
    <text evidence="1">Homodimer.</text>
</comment>
<comment type="subcellular location">
    <subcellularLocation>
        <location evidence="1">Cytoplasm</location>
    </subcellularLocation>
</comment>
<comment type="similarity">
    <text evidence="1">Belongs to the SHMT family.</text>
</comment>
<name>GLYA_LIMRD</name>
<keyword id="KW-0028">Amino-acid biosynthesis</keyword>
<keyword id="KW-0963">Cytoplasm</keyword>
<keyword id="KW-0554">One-carbon metabolism</keyword>
<keyword id="KW-0663">Pyridoxal phosphate</keyword>
<keyword id="KW-1185">Reference proteome</keyword>
<keyword id="KW-0808">Transferase</keyword>
<dbReference type="EC" id="2.1.2.1" evidence="1"/>
<dbReference type="EMBL" id="CP000705">
    <property type="protein sequence ID" value="ABQ82723.1"/>
    <property type="molecule type" value="Genomic_DNA"/>
</dbReference>
<dbReference type="RefSeq" id="WP_003667552.1">
    <property type="nucleotide sequence ID" value="NC_009513.1"/>
</dbReference>
<dbReference type="SMR" id="A5VIP9"/>
<dbReference type="STRING" id="557436.Lreu_0455"/>
<dbReference type="KEGG" id="lre:Lreu_0455"/>
<dbReference type="PATRIC" id="fig|557436.17.peg.853"/>
<dbReference type="eggNOG" id="COG0112">
    <property type="taxonomic scope" value="Bacteria"/>
</dbReference>
<dbReference type="HOGENOM" id="CLU_022477_2_1_9"/>
<dbReference type="UniPathway" id="UPA00193"/>
<dbReference type="UniPathway" id="UPA00288">
    <property type="reaction ID" value="UER01023"/>
</dbReference>
<dbReference type="Proteomes" id="UP000001991">
    <property type="component" value="Chromosome"/>
</dbReference>
<dbReference type="GO" id="GO:0005829">
    <property type="term" value="C:cytosol"/>
    <property type="evidence" value="ECO:0007669"/>
    <property type="project" value="TreeGrafter"/>
</dbReference>
<dbReference type="GO" id="GO:0004372">
    <property type="term" value="F:glycine hydroxymethyltransferase activity"/>
    <property type="evidence" value="ECO:0007669"/>
    <property type="project" value="UniProtKB-UniRule"/>
</dbReference>
<dbReference type="GO" id="GO:0030170">
    <property type="term" value="F:pyridoxal phosphate binding"/>
    <property type="evidence" value="ECO:0007669"/>
    <property type="project" value="UniProtKB-UniRule"/>
</dbReference>
<dbReference type="GO" id="GO:0019264">
    <property type="term" value="P:glycine biosynthetic process from serine"/>
    <property type="evidence" value="ECO:0007669"/>
    <property type="project" value="UniProtKB-UniRule"/>
</dbReference>
<dbReference type="GO" id="GO:0035999">
    <property type="term" value="P:tetrahydrofolate interconversion"/>
    <property type="evidence" value="ECO:0007669"/>
    <property type="project" value="UniProtKB-UniRule"/>
</dbReference>
<dbReference type="CDD" id="cd00378">
    <property type="entry name" value="SHMT"/>
    <property type="match status" value="1"/>
</dbReference>
<dbReference type="FunFam" id="3.40.640.10:FF:000001">
    <property type="entry name" value="Serine hydroxymethyltransferase"/>
    <property type="match status" value="1"/>
</dbReference>
<dbReference type="Gene3D" id="3.90.1150.10">
    <property type="entry name" value="Aspartate Aminotransferase, domain 1"/>
    <property type="match status" value="1"/>
</dbReference>
<dbReference type="Gene3D" id="3.40.640.10">
    <property type="entry name" value="Type I PLP-dependent aspartate aminotransferase-like (Major domain)"/>
    <property type="match status" value="1"/>
</dbReference>
<dbReference type="HAMAP" id="MF_00051">
    <property type="entry name" value="SHMT"/>
    <property type="match status" value="1"/>
</dbReference>
<dbReference type="InterPro" id="IPR015424">
    <property type="entry name" value="PyrdxlP-dep_Trfase"/>
</dbReference>
<dbReference type="InterPro" id="IPR015421">
    <property type="entry name" value="PyrdxlP-dep_Trfase_major"/>
</dbReference>
<dbReference type="InterPro" id="IPR015422">
    <property type="entry name" value="PyrdxlP-dep_Trfase_small"/>
</dbReference>
<dbReference type="InterPro" id="IPR001085">
    <property type="entry name" value="Ser_HO-MeTrfase"/>
</dbReference>
<dbReference type="InterPro" id="IPR049943">
    <property type="entry name" value="Ser_HO-MeTrfase-like"/>
</dbReference>
<dbReference type="InterPro" id="IPR019798">
    <property type="entry name" value="Ser_HO-MeTrfase_PLP_BS"/>
</dbReference>
<dbReference type="InterPro" id="IPR039429">
    <property type="entry name" value="SHMT-like_dom"/>
</dbReference>
<dbReference type="NCBIfam" id="NF000586">
    <property type="entry name" value="PRK00011.1"/>
    <property type="match status" value="1"/>
</dbReference>
<dbReference type="PANTHER" id="PTHR11680">
    <property type="entry name" value="SERINE HYDROXYMETHYLTRANSFERASE"/>
    <property type="match status" value="1"/>
</dbReference>
<dbReference type="PANTHER" id="PTHR11680:SF35">
    <property type="entry name" value="SERINE HYDROXYMETHYLTRANSFERASE 1"/>
    <property type="match status" value="1"/>
</dbReference>
<dbReference type="Pfam" id="PF00464">
    <property type="entry name" value="SHMT"/>
    <property type="match status" value="1"/>
</dbReference>
<dbReference type="PIRSF" id="PIRSF000412">
    <property type="entry name" value="SHMT"/>
    <property type="match status" value="1"/>
</dbReference>
<dbReference type="SUPFAM" id="SSF53383">
    <property type="entry name" value="PLP-dependent transferases"/>
    <property type="match status" value="1"/>
</dbReference>
<dbReference type="PROSITE" id="PS00096">
    <property type="entry name" value="SHMT"/>
    <property type="match status" value="1"/>
</dbReference>